<name>SYR_PSEF5</name>
<proteinExistence type="inferred from homology"/>
<organism>
    <name type="scientific">Pseudomonas fluorescens (strain ATCC BAA-477 / NRRL B-23932 / Pf-5)</name>
    <dbReference type="NCBI Taxonomy" id="220664"/>
    <lineage>
        <taxon>Bacteria</taxon>
        <taxon>Pseudomonadati</taxon>
        <taxon>Pseudomonadota</taxon>
        <taxon>Gammaproteobacteria</taxon>
        <taxon>Pseudomonadales</taxon>
        <taxon>Pseudomonadaceae</taxon>
        <taxon>Pseudomonas</taxon>
    </lineage>
</organism>
<comment type="catalytic activity">
    <reaction evidence="1">
        <text>tRNA(Arg) + L-arginine + ATP = L-arginyl-tRNA(Arg) + AMP + diphosphate</text>
        <dbReference type="Rhea" id="RHEA:20301"/>
        <dbReference type="Rhea" id="RHEA-COMP:9658"/>
        <dbReference type="Rhea" id="RHEA-COMP:9673"/>
        <dbReference type="ChEBI" id="CHEBI:30616"/>
        <dbReference type="ChEBI" id="CHEBI:32682"/>
        <dbReference type="ChEBI" id="CHEBI:33019"/>
        <dbReference type="ChEBI" id="CHEBI:78442"/>
        <dbReference type="ChEBI" id="CHEBI:78513"/>
        <dbReference type="ChEBI" id="CHEBI:456215"/>
        <dbReference type="EC" id="6.1.1.19"/>
    </reaction>
</comment>
<comment type="subunit">
    <text evidence="1">Monomer.</text>
</comment>
<comment type="subcellular location">
    <subcellularLocation>
        <location evidence="1">Cytoplasm</location>
    </subcellularLocation>
</comment>
<comment type="similarity">
    <text evidence="1">Belongs to the class-I aminoacyl-tRNA synthetase family.</text>
</comment>
<evidence type="ECO:0000255" key="1">
    <source>
        <dbReference type="HAMAP-Rule" id="MF_00123"/>
    </source>
</evidence>
<protein>
    <recommendedName>
        <fullName evidence="1">Arginine--tRNA ligase</fullName>
        <ecNumber evidence="1">6.1.1.19</ecNumber>
    </recommendedName>
    <alternativeName>
        <fullName evidence="1">Arginyl-tRNA synthetase</fullName>
        <shortName evidence="1">ArgRS</shortName>
    </alternativeName>
</protein>
<dbReference type="EC" id="6.1.1.19" evidence="1"/>
<dbReference type="EMBL" id="CP000076">
    <property type="protein sequence ID" value="AAY95848.1"/>
    <property type="molecule type" value="Genomic_DNA"/>
</dbReference>
<dbReference type="RefSeq" id="WP_011058813.1">
    <property type="nucleotide sequence ID" value="NC_004129.6"/>
</dbReference>
<dbReference type="SMR" id="Q4KJK0"/>
<dbReference type="STRING" id="220664.PFL_0439"/>
<dbReference type="GeneID" id="57473428"/>
<dbReference type="KEGG" id="pfl:PFL_0439"/>
<dbReference type="PATRIC" id="fig|220664.5.peg.448"/>
<dbReference type="eggNOG" id="COG0018">
    <property type="taxonomic scope" value="Bacteria"/>
</dbReference>
<dbReference type="HOGENOM" id="CLU_006406_5_1_6"/>
<dbReference type="Proteomes" id="UP000008540">
    <property type="component" value="Chromosome"/>
</dbReference>
<dbReference type="GO" id="GO:0005737">
    <property type="term" value="C:cytoplasm"/>
    <property type="evidence" value="ECO:0007669"/>
    <property type="project" value="UniProtKB-SubCell"/>
</dbReference>
<dbReference type="GO" id="GO:0004814">
    <property type="term" value="F:arginine-tRNA ligase activity"/>
    <property type="evidence" value="ECO:0007669"/>
    <property type="project" value="UniProtKB-UniRule"/>
</dbReference>
<dbReference type="GO" id="GO:0005524">
    <property type="term" value="F:ATP binding"/>
    <property type="evidence" value="ECO:0007669"/>
    <property type="project" value="UniProtKB-UniRule"/>
</dbReference>
<dbReference type="GO" id="GO:0006420">
    <property type="term" value="P:arginyl-tRNA aminoacylation"/>
    <property type="evidence" value="ECO:0007669"/>
    <property type="project" value="UniProtKB-UniRule"/>
</dbReference>
<dbReference type="CDD" id="cd07956">
    <property type="entry name" value="Anticodon_Ia_Arg"/>
    <property type="match status" value="1"/>
</dbReference>
<dbReference type="CDD" id="cd00671">
    <property type="entry name" value="ArgRS_core"/>
    <property type="match status" value="1"/>
</dbReference>
<dbReference type="FunFam" id="3.30.1360.70:FF:000003">
    <property type="entry name" value="Arginine--tRNA ligase"/>
    <property type="match status" value="1"/>
</dbReference>
<dbReference type="FunFam" id="3.40.50.620:FF:000030">
    <property type="entry name" value="Arginine--tRNA ligase"/>
    <property type="match status" value="1"/>
</dbReference>
<dbReference type="FunFam" id="1.10.730.10:FF:000006">
    <property type="entry name" value="Arginyl-tRNA synthetase 2, mitochondrial"/>
    <property type="match status" value="1"/>
</dbReference>
<dbReference type="Gene3D" id="3.30.1360.70">
    <property type="entry name" value="Arginyl tRNA synthetase N-terminal domain"/>
    <property type="match status" value="1"/>
</dbReference>
<dbReference type="Gene3D" id="3.40.50.620">
    <property type="entry name" value="HUPs"/>
    <property type="match status" value="1"/>
</dbReference>
<dbReference type="Gene3D" id="1.10.730.10">
    <property type="entry name" value="Isoleucyl-tRNA Synthetase, Domain 1"/>
    <property type="match status" value="1"/>
</dbReference>
<dbReference type="HAMAP" id="MF_00123">
    <property type="entry name" value="Arg_tRNA_synth"/>
    <property type="match status" value="1"/>
</dbReference>
<dbReference type="InterPro" id="IPR001412">
    <property type="entry name" value="aa-tRNA-synth_I_CS"/>
</dbReference>
<dbReference type="InterPro" id="IPR001278">
    <property type="entry name" value="Arg-tRNA-ligase"/>
</dbReference>
<dbReference type="InterPro" id="IPR005148">
    <property type="entry name" value="Arg-tRNA-synth_N"/>
</dbReference>
<dbReference type="InterPro" id="IPR036695">
    <property type="entry name" value="Arg-tRNA-synth_N_sf"/>
</dbReference>
<dbReference type="InterPro" id="IPR035684">
    <property type="entry name" value="ArgRS_core"/>
</dbReference>
<dbReference type="InterPro" id="IPR008909">
    <property type="entry name" value="DALR_anticod-bd"/>
</dbReference>
<dbReference type="InterPro" id="IPR014729">
    <property type="entry name" value="Rossmann-like_a/b/a_fold"/>
</dbReference>
<dbReference type="InterPro" id="IPR009080">
    <property type="entry name" value="tRNAsynth_Ia_anticodon-bd"/>
</dbReference>
<dbReference type="NCBIfam" id="TIGR00456">
    <property type="entry name" value="argS"/>
    <property type="match status" value="1"/>
</dbReference>
<dbReference type="PANTHER" id="PTHR11956:SF5">
    <property type="entry name" value="ARGININE--TRNA LIGASE, CYTOPLASMIC"/>
    <property type="match status" value="1"/>
</dbReference>
<dbReference type="PANTHER" id="PTHR11956">
    <property type="entry name" value="ARGINYL-TRNA SYNTHETASE"/>
    <property type="match status" value="1"/>
</dbReference>
<dbReference type="Pfam" id="PF03485">
    <property type="entry name" value="Arg_tRNA_synt_N"/>
    <property type="match status" value="1"/>
</dbReference>
<dbReference type="Pfam" id="PF05746">
    <property type="entry name" value="DALR_1"/>
    <property type="match status" value="1"/>
</dbReference>
<dbReference type="Pfam" id="PF00750">
    <property type="entry name" value="tRNA-synt_1d"/>
    <property type="match status" value="1"/>
</dbReference>
<dbReference type="PRINTS" id="PR01038">
    <property type="entry name" value="TRNASYNTHARG"/>
</dbReference>
<dbReference type="SMART" id="SM01016">
    <property type="entry name" value="Arg_tRNA_synt_N"/>
    <property type="match status" value="1"/>
</dbReference>
<dbReference type="SMART" id="SM00836">
    <property type="entry name" value="DALR_1"/>
    <property type="match status" value="1"/>
</dbReference>
<dbReference type="SUPFAM" id="SSF47323">
    <property type="entry name" value="Anticodon-binding domain of a subclass of class I aminoacyl-tRNA synthetases"/>
    <property type="match status" value="1"/>
</dbReference>
<dbReference type="SUPFAM" id="SSF55190">
    <property type="entry name" value="Arginyl-tRNA synthetase (ArgRS), N-terminal 'additional' domain"/>
    <property type="match status" value="1"/>
</dbReference>
<dbReference type="SUPFAM" id="SSF52374">
    <property type="entry name" value="Nucleotidylyl transferase"/>
    <property type="match status" value="1"/>
</dbReference>
<dbReference type="PROSITE" id="PS00178">
    <property type="entry name" value="AA_TRNA_LIGASE_I"/>
    <property type="match status" value="1"/>
</dbReference>
<accession>Q4KJK0</accession>
<sequence length="578" mass="63923">MKDTIRQLIQQAITQLVTEGVLPEGLTPAIQVENTRDKTHGDFASNIAMMLAKPAGMKPRDLAEKIIAALPAHEDLSKAEIAGPGFINFFQNTQALAARLDAALGDDHLGVRKAGPAQRTVIDMSAPNLAKEMHVGHLRSTIIGDGVARVLEFLGDTVIRQNHVGDWGTQFGMLMAYLEENPITSDELSDLENFYRAAKQRFDESEAFADRARGLVVKLQAGDPDCLELWTKFKDISLSHCQKIYELLNVKLTMADVMGESAYNDDLINVVNDLKAQGLLVESNGAQCVFLDEFKNAEGEPLPVIIVKADGGYLYATTDLAAVRYRSGKLKADRALYFVDQRQALHFQQVFAVARKAGFVTHPMEMEHMGFGTMNGADGRPFKTRDGGTVKLIDLLTEAEERAYALVKEKNPQLPEADLRSIAKVVGIDSVKYADLSKHRTSDYSFNFDLMLNFEGNTAPYLLYAYTRAAGVFRKLGKDFSEVGGQIELHAAQELELAAKLAQFGEILNNVAEKGTPHILCTYLYDVAGLFSSFYENCPILAAETPTQMHSRLRLTELTRRTLKQGLELLGLKVLEQM</sequence>
<keyword id="KW-0030">Aminoacyl-tRNA synthetase</keyword>
<keyword id="KW-0067">ATP-binding</keyword>
<keyword id="KW-0963">Cytoplasm</keyword>
<keyword id="KW-0436">Ligase</keyword>
<keyword id="KW-0547">Nucleotide-binding</keyword>
<keyword id="KW-0648">Protein biosynthesis</keyword>
<reference key="1">
    <citation type="journal article" date="2005" name="Nat. Biotechnol.">
        <title>Complete genome sequence of the plant commensal Pseudomonas fluorescens Pf-5.</title>
        <authorList>
            <person name="Paulsen I.T."/>
            <person name="Press C.M."/>
            <person name="Ravel J."/>
            <person name="Kobayashi D.Y."/>
            <person name="Myers G.S.A."/>
            <person name="Mavrodi D.V."/>
            <person name="DeBoy R.T."/>
            <person name="Seshadri R."/>
            <person name="Ren Q."/>
            <person name="Madupu R."/>
            <person name="Dodson R.J."/>
            <person name="Durkin A.S."/>
            <person name="Brinkac L.M."/>
            <person name="Daugherty S.C."/>
            <person name="Sullivan S.A."/>
            <person name="Rosovitz M.J."/>
            <person name="Gwinn M.L."/>
            <person name="Zhou L."/>
            <person name="Schneider D.J."/>
            <person name="Cartinhour S.W."/>
            <person name="Nelson W.C."/>
            <person name="Weidman J."/>
            <person name="Watkins K."/>
            <person name="Tran K."/>
            <person name="Khouri H."/>
            <person name="Pierson E.A."/>
            <person name="Pierson L.S. III"/>
            <person name="Thomashow L.S."/>
            <person name="Loper J.E."/>
        </authorList>
    </citation>
    <scope>NUCLEOTIDE SEQUENCE [LARGE SCALE GENOMIC DNA]</scope>
    <source>
        <strain>ATCC BAA-477 / NRRL B-23932 / Pf-5</strain>
    </source>
</reference>
<gene>
    <name evidence="1" type="primary">argS</name>
    <name type="ordered locus">PFL_0439</name>
</gene>
<feature type="chain" id="PRO_0000242069" description="Arginine--tRNA ligase">
    <location>
        <begin position="1"/>
        <end position="578"/>
    </location>
</feature>
<feature type="short sequence motif" description="'HIGH' region">
    <location>
        <begin position="127"/>
        <end position="137"/>
    </location>
</feature>